<accession>A5IG48</accession>
<feature type="chain" id="PRO_1000050991" description="Putative 3-methyladenine DNA glycosylase">
    <location>
        <begin position="1"/>
        <end position="183"/>
    </location>
</feature>
<evidence type="ECO:0000255" key="1">
    <source>
        <dbReference type="HAMAP-Rule" id="MF_00527"/>
    </source>
</evidence>
<comment type="similarity">
    <text evidence="1">Belongs to the DNA glycosylase MPG family.</text>
</comment>
<keyword id="KW-0227">DNA damage</keyword>
<keyword id="KW-0234">DNA repair</keyword>
<keyword id="KW-0378">Hydrolase</keyword>
<organism>
    <name type="scientific">Legionella pneumophila (strain Corby)</name>
    <dbReference type="NCBI Taxonomy" id="400673"/>
    <lineage>
        <taxon>Bacteria</taxon>
        <taxon>Pseudomonadati</taxon>
        <taxon>Pseudomonadota</taxon>
        <taxon>Gammaproteobacteria</taxon>
        <taxon>Legionellales</taxon>
        <taxon>Legionellaceae</taxon>
        <taxon>Legionella</taxon>
    </lineage>
</organism>
<gene>
    <name type="ordered locus">LPC_2427</name>
</gene>
<proteinExistence type="inferred from homology"/>
<sequence>MRKLPRPFYERDTILVAKELLGKYLVHHDGLEEKIGRIVEVEAYLGQHDLACHSSKGLTKRTKVMFGPAGYAYVYLIYGMYYCMNVVTEKEGIGSAVLIRALEPIKNIQDRTQGPGLLSKAMRIDSKLNHRDLLSNDFYIAEPNSPTDFTIIEKPRIGVHYAKEWANELLRFYIKDNPYISKT</sequence>
<protein>
    <recommendedName>
        <fullName evidence="1">Putative 3-methyladenine DNA glycosylase</fullName>
        <ecNumber evidence="1">3.2.2.-</ecNumber>
    </recommendedName>
</protein>
<name>3MGH_LEGPC</name>
<reference key="1">
    <citation type="submission" date="2006-11" db="EMBL/GenBank/DDBJ databases">
        <title>Identification and characterization of a new conjugation/ type IVA secretion system (trb/tra) of L. pneumophila Corby localized on a mobile genomic island.</title>
        <authorList>
            <person name="Gloeckner G."/>
            <person name="Albert-Weissenberger C."/>
            <person name="Weinmann E."/>
            <person name="Jacobi S."/>
            <person name="Schunder E."/>
            <person name="Steinert M."/>
            <person name="Buchrieser C."/>
            <person name="Hacker J."/>
            <person name="Heuner K."/>
        </authorList>
    </citation>
    <scope>NUCLEOTIDE SEQUENCE [LARGE SCALE GENOMIC DNA]</scope>
    <source>
        <strain>Corby</strain>
    </source>
</reference>
<dbReference type="EC" id="3.2.2.-" evidence="1"/>
<dbReference type="EMBL" id="CP000675">
    <property type="protein sequence ID" value="ABQ56348.1"/>
    <property type="molecule type" value="Genomic_DNA"/>
</dbReference>
<dbReference type="RefSeq" id="WP_011945974.1">
    <property type="nucleotide sequence ID" value="NZ_JAPMSS010000002.1"/>
</dbReference>
<dbReference type="SMR" id="A5IG48"/>
<dbReference type="KEGG" id="lpc:LPC_2427"/>
<dbReference type="HOGENOM" id="CLU_060471_4_1_6"/>
<dbReference type="GO" id="GO:0003905">
    <property type="term" value="F:alkylbase DNA N-glycosylase activity"/>
    <property type="evidence" value="ECO:0007669"/>
    <property type="project" value="InterPro"/>
</dbReference>
<dbReference type="GO" id="GO:0003677">
    <property type="term" value="F:DNA binding"/>
    <property type="evidence" value="ECO:0007669"/>
    <property type="project" value="InterPro"/>
</dbReference>
<dbReference type="GO" id="GO:0006284">
    <property type="term" value="P:base-excision repair"/>
    <property type="evidence" value="ECO:0007669"/>
    <property type="project" value="InterPro"/>
</dbReference>
<dbReference type="CDD" id="cd00540">
    <property type="entry name" value="AAG"/>
    <property type="match status" value="1"/>
</dbReference>
<dbReference type="FunFam" id="3.10.300.10:FF:000001">
    <property type="entry name" value="Putative 3-methyladenine DNA glycosylase"/>
    <property type="match status" value="1"/>
</dbReference>
<dbReference type="Gene3D" id="3.10.300.10">
    <property type="entry name" value="Methylpurine-DNA glycosylase (MPG)"/>
    <property type="match status" value="1"/>
</dbReference>
<dbReference type="HAMAP" id="MF_00527">
    <property type="entry name" value="3MGH"/>
    <property type="match status" value="1"/>
</dbReference>
<dbReference type="InterPro" id="IPR011034">
    <property type="entry name" value="Formyl_transferase-like_C_sf"/>
</dbReference>
<dbReference type="InterPro" id="IPR003180">
    <property type="entry name" value="MPG"/>
</dbReference>
<dbReference type="InterPro" id="IPR036995">
    <property type="entry name" value="MPG_sf"/>
</dbReference>
<dbReference type="NCBIfam" id="TIGR00567">
    <property type="entry name" value="3mg"/>
    <property type="match status" value="1"/>
</dbReference>
<dbReference type="PANTHER" id="PTHR10429">
    <property type="entry name" value="DNA-3-METHYLADENINE GLYCOSYLASE"/>
    <property type="match status" value="1"/>
</dbReference>
<dbReference type="PANTHER" id="PTHR10429:SF0">
    <property type="entry name" value="DNA-3-METHYLADENINE GLYCOSYLASE"/>
    <property type="match status" value="1"/>
</dbReference>
<dbReference type="Pfam" id="PF02245">
    <property type="entry name" value="Pur_DNA_glyco"/>
    <property type="match status" value="1"/>
</dbReference>
<dbReference type="SUPFAM" id="SSF50486">
    <property type="entry name" value="FMT C-terminal domain-like"/>
    <property type="match status" value="1"/>
</dbReference>